<organism>
    <name type="scientific">Mycobacterium tuberculosis (strain ATCC 25618 / H37Rv)</name>
    <dbReference type="NCBI Taxonomy" id="83332"/>
    <lineage>
        <taxon>Bacteria</taxon>
        <taxon>Bacillati</taxon>
        <taxon>Actinomycetota</taxon>
        <taxon>Actinomycetes</taxon>
        <taxon>Mycobacteriales</taxon>
        <taxon>Mycobacteriaceae</taxon>
        <taxon>Mycobacterium</taxon>
        <taxon>Mycobacterium tuberculosis complex</taxon>
    </lineage>
</organism>
<reference key="1">
    <citation type="journal article" date="1998" name="Nature">
        <title>Deciphering the biology of Mycobacterium tuberculosis from the complete genome sequence.</title>
        <authorList>
            <person name="Cole S.T."/>
            <person name="Brosch R."/>
            <person name="Parkhill J."/>
            <person name="Garnier T."/>
            <person name="Churcher C.M."/>
            <person name="Harris D.E."/>
            <person name="Gordon S.V."/>
            <person name="Eiglmeier K."/>
            <person name="Gas S."/>
            <person name="Barry C.E. III"/>
            <person name="Tekaia F."/>
            <person name="Badcock K."/>
            <person name="Basham D."/>
            <person name="Brown D."/>
            <person name="Chillingworth T."/>
            <person name="Connor R."/>
            <person name="Davies R.M."/>
            <person name="Devlin K."/>
            <person name="Feltwell T."/>
            <person name="Gentles S."/>
            <person name="Hamlin N."/>
            <person name="Holroyd S."/>
            <person name="Hornsby T."/>
            <person name="Jagels K."/>
            <person name="Krogh A."/>
            <person name="McLean J."/>
            <person name="Moule S."/>
            <person name="Murphy L.D."/>
            <person name="Oliver S."/>
            <person name="Osborne J."/>
            <person name="Quail M.A."/>
            <person name="Rajandream M.A."/>
            <person name="Rogers J."/>
            <person name="Rutter S."/>
            <person name="Seeger K."/>
            <person name="Skelton S."/>
            <person name="Squares S."/>
            <person name="Squares R."/>
            <person name="Sulston J.E."/>
            <person name="Taylor K."/>
            <person name="Whitehead S."/>
            <person name="Barrell B.G."/>
        </authorList>
    </citation>
    <scope>NUCLEOTIDE SEQUENCE [LARGE SCALE GENOMIC DNA]</scope>
    <source>
        <strain>ATCC 25618 / H37Rv</strain>
    </source>
</reference>
<reference evidence="18" key="2">
    <citation type="journal article" date="2011" name="Mol. Cell. Proteomics">
        <title>Proteogenomic analysis of Mycobacterium tuberculosis by high resolution mass spectrometry.</title>
        <authorList>
            <person name="Kelkar D.S."/>
            <person name="Kumar D."/>
            <person name="Kumar P."/>
            <person name="Balakrishnan L."/>
            <person name="Muthusamy B."/>
            <person name="Yadav A.K."/>
            <person name="Shrivastava P."/>
            <person name="Marimuthu A."/>
            <person name="Anand S."/>
            <person name="Sundaram H."/>
            <person name="Kingsbury R."/>
            <person name="Harsha H.C."/>
            <person name="Nair B."/>
            <person name="Prasad T.S."/>
            <person name="Chauhan D.S."/>
            <person name="Katoch K."/>
            <person name="Katoch V.M."/>
            <person name="Kumar P."/>
            <person name="Chaerkady R."/>
            <person name="Ramachandran S."/>
            <person name="Dash D."/>
            <person name="Pandey A."/>
        </authorList>
    </citation>
    <scope>IDENTIFICATION BY MASS SPECTROMETRY [LARGE SCALE ANALYSIS]</scope>
</reference>
<reference key="3">
    <citation type="journal article" date="2013" name="J. Biol. Chem.">
        <title>Mycobacterium tuberculosis MutT1 (Rv2985) and ADPRase (Rv1700) proteins constitute a two-stage mechanism of 8-oxo-dGTP and 8-oxo-GTP detoxification and adenosine to cytidine mutation avoidance.</title>
        <authorList>
            <person name="Patil A.G."/>
            <person name="Sang P.B."/>
            <person name="Govindan A."/>
            <person name="Varshney U."/>
        </authorList>
    </citation>
    <scope>FUNCTION</scope>
    <scope>CATALYTIC ACTIVITY</scope>
    <scope>BIOPHYSICOCHEMICAL PROPERTIES</scope>
    <source>
        <strain>H37Rv</strain>
    </source>
</reference>
<reference evidence="12 13 14 15 16" key="4">
    <citation type="journal article" date="2003" name="Structure">
        <title>Structure and mechanism of MT-ADPRase, a nudix hydrolase from Mycobacterium tuberculosis.</title>
        <authorList>
            <person name="Kang L.W."/>
            <person name="Gabelli S.B."/>
            <person name="Cunningham J.E."/>
            <person name="O'Handley S.F."/>
            <person name="Amzel L.M."/>
        </authorList>
    </citation>
    <scope>X-RAY CRYSTALLOGRAPHY (2.00 ANGSTROMS) IN COMPLEXES WITH ADPR AND MANGANESE</scope>
    <scope>COFACTOR</scope>
    <scope>ACTIVE SITE</scope>
</reference>
<reference evidence="17" key="5">
    <citation type="journal article" date="2016" name="J. Bioenerg. Biomembr.">
        <title>Kinetic and mutational studies of the adenosine diphosphate ribose hydrolase from Mycobacterium tuberculosis.</title>
        <authorList>
            <person name="O'Handley S.F."/>
            <person name="Thirawatananond P."/>
            <person name="Kang L.W."/>
            <person name="Cunningham J.E."/>
            <person name="Leyva J.A."/>
            <person name="Amzel L.M."/>
            <person name="Gabelli S.B."/>
        </authorList>
    </citation>
    <scope>X-RAY CRYSTALLOGRAPHY (2.00 ANGSTROMS) OF MUTANT GLN-142</scope>
    <scope>FUNCTION</scope>
    <scope>CATALYTIC ACTIVITY</scope>
    <scope>COFACTOR</scope>
    <scope>BIOPHYSICOCHEMICAL PROPERTIES</scope>
    <scope>ACTIVE SITE</scope>
    <scope>MUTAGENESIS OF ARG-64; GLU-93; GLU-97 AND GLU-142</scope>
</reference>
<sequence length="207" mass="22893">MAEHDFETISSETLHTGAIFALRRDQVRMPGGGIVTREVVEHFGAVAIVAMDDNGNIPMVYQYRHTYGRRLWELPAGLLDVAGEPPHLTAARELREEVGLQASTWQVLVDLDTAPGFSDESVRVYLATGLREVGRPEAHHEEADMTMGWYPIAEAARRVLRGEIVNSIAIAGVLAVHAVTTGFAQPRPLDTEWIDRPTAFAARRAER</sequence>
<gene>
    <name evidence="11" type="ordered locus">Rv1700</name>
</gene>
<accession>I6X235</accession>
<protein>
    <recommendedName>
        <fullName evidence="8">ADP-ribose pyrophosphatase</fullName>
        <ecNumber evidence="5">3.6.1.13</ecNumber>
    </recommendedName>
    <alternativeName>
        <fullName evidence="8">8-oxo-(d)GDP phosphatase</fullName>
        <ecNumber evidence="4">3.6.1.58</ecNumber>
    </alternativeName>
    <alternativeName>
        <fullName evidence="7">ADPR hydrolase</fullName>
    </alternativeName>
    <alternativeName>
        <fullName evidence="6">MT-ADPRase</fullName>
    </alternativeName>
</protein>
<comment type="function">
    <text evidence="4 5">Catalyzes the hydrolysis of ADP-ribose (ADPR) to AMP and ribose-5-phosphate. Can also hydrolyze ADP-mannose and ADP-glucose, with lower efficiency. Has weaker activity with NAD, GDP-sugars and UDP-sugars (PubMed:27683242). Also catalyzes the conversion of 8-oxo-dGDP to 8-oxo-dGMP, and 8-oxo-GDP to 8-oxo-GMP. Functions in concert with MutT1 to detoxify 8-oxo-dGTP to 8-oxo-dGMP and may play an important role in supporting cellular growth under oxidative stress (PubMed:23463507). The catalytic efficiency is much higher for the hydrolysis of ADPR than 8-oxo-dGTP, suggesting a more relevant biological role in hydrolysis of ADPR (PubMed:27683242).</text>
</comment>
<comment type="catalytic activity">
    <reaction evidence="5">
        <text>ADP-D-ribose + H2O = D-ribose 5-phosphate + AMP + 2 H(+)</text>
        <dbReference type="Rhea" id="RHEA:10412"/>
        <dbReference type="ChEBI" id="CHEBI:15377"/>
        <dbReference type="ChEBI" id="CHEBI:15378"/>
        <dbReference type="ChEBI" id="CHEBI:57967"/>
        <dbReference type="ChEBI" id="CHEBI:78346"/>
        <dbReference type="ChEBI" id="CHEBI:456215"/>
        <dbReference type="EC" id="3.6.1.13"/>
    </reaction>
</comment>
<comment type="catalytic activity">
    <reaction evidence="4">
        <text>8-oxo-dGDP + H2O = 8-oxo-dGMP + phosphate + H(+)</text>
        <dbReference type="Rhea" id="RHEA:32063"/>
        <dbReference type="ChEBI" id="CHEBI:15377"/>
        <dbReference type="ChEBI" id="CHEBI:15378"/>
        <dbReference type="ChEBI" id="CHEBI:43474"/>
        <dbReference type="ChEBI" id="CHEBI:63224"/>
        <dbReference type="ChEBI" id="CHEBI:63715"/>
        <dbReference type="EC" id="3.6.1.58"/>
    </reaction>
</comment>
<comment type="catalytic activity">
    <reaction evidence="4">
        <text>8-oxo-GDP + H2O = 8-oxo-GMP + phosphate + H(+)</text>
        <dbReference type="Rhea" id="RHEA:62356"/>
        <dbReference type="ChEBI" id="CHEBI:15377"/>
        <dbReference type="ChEBI" id="CHEBI:15378"/>
        <dbReference type="ChEBI" id="CHEBI:43474"/>
        <dbReference type="ChEBI" id="CHEBI:143554"/>
        <dbReference type="ChEBI" id="CHEBI:145694"/>
        <dbReference type="EC" id="3.6.1.58"/>
    </reaction>
</comment>
<comment type="cofactor">
    <cofactor evidence="3 5">
        <name>Mg(2+)</name>
        <dbReference type="ChEBI" id="CHEBI:18420"/>
    </cofactor>
    <cofactor evidence="5">
        <name>Mn(2+)</name>
        <dbReference type="ChEBI" id="CHEBI:29035"/>
    </cofactor>
    <text evidence="3 5">Binds 3 Mg(2+) ions per subunit (PubMed:12906832). Activity is highest with Mn(2+). Can also use Zn(2+) or Co(2+), with lower efficiency (PubMed:27683242).</text>
</comment>
<comment type="biophysicochemical properties">
    <kinetics>
        <KM evidence="5">200 uM for ADPR (in the presence of Mg(2+) ions)</KM>
        <KM evidence="5">554 uM for ADPR (in the presence of Mn(2+) ions)</KM>
        <KM evidence="4">9.5 uM for 8-oxo-dGDP</KM>
        <Vmax evidence="4">0.04 pmol/min/ng enzyme with 8-oxo-dGDP as substrate</Vmax>
        <text evidence="4 5">kcat is 14.4 sec(-1) with ADPR as substrate (in the presence of Mg(2+) ions). kcat is 28.9 sec(-1) with ADPR as substrate (in the presence of Mn(2+) ions) (PubMed:27683242). kcat is 0.0164 sec(-1) with 8-oxo-dGDP as substrate (PubMed:23463507).</text>
    </kinetics>
    <phDependence>
        <text evidence="5">Optimum pH is 8.0.</text>
    </phDependence>
</comment>
<comment type="subunit">
    <text evidence="3">Homodimer.</text>
</comment>
<comment type="similarity">
    <text evidence="8">Belongs to the Nudix hydrolase family.</text>
</comment>
<feature type="chain" id="PRO_0000449350" description="ADP-ribose pyrophosphatase">
    <location>
        <begin position="1"/>
        <end position="207"/>
    </location>
</feature>
<feature type="domain" description="Nudix hydrolase" evidence="2">
    <location>
        <begin position="41"/>
        <end position="172"/>
    </location>
</feature>
<feature type="short sequence motif" description="Nudix box" evidence="2">
    <location>
        <begin position="77"/>
        <end position="99"/>
    </location>
</feature>
<feature type="active site" description="Proton acceptor" evidence="9 10">
    <location>
        <position position="142"/>
    </location>
</feature>
<feature type="binding site" evidence="1">
    <location>
        <begin position="37"/>
        <end position="38"/>
    </location>
    <ligand>
        <name>substrate</name>
        <note>ligand shared between dimeric partners</note>
    </ligand>
</feature>
<feature type="binding site" description="in other chain" evidence="3">
    <location>
        <position position="64"/>
    </location>
    <ligand>
        <name>substrate</name>
        <note>ligand shared between dimeric partners</note>
    </ligand>
</feature>
<feature type="binding site" evidence="3">
    <location>
        <position position="76"/>
    </location>
    <ligand>
        <name>Mg(2+)</name>
        <dbReference type="ChEBI" id="CHEBI:18420"/>
        <label>1</label>
    </ligand>
</feature>
<feature type="binding site" description="in other chain" evidence="3">
    <location>
        <position position="78"/>
    </location>
    <ligand>
        <name>substrate</name>
        <note>ligand shared between dimeric partners</note>
    </ligand>
</feature>
<feature type="binding site" evidence="3">
    <location>
        <position position="93"/>
    </location>
    <ligand>
        <name>Mg(2+)</name>
        <dbReference type="ChEBI" id="CHEBI:18420"/>
        <label>2</label>
    </ligand>
</feature>
<feature type="binding site" evidence="3">
    <location>
        <position position="93"/>
    </location>
    <ligand>
        <name>Mg(2+)</name>
        <dbReference type="ChEBI" id="CHEBI:18420"/>
        <label>3</label>
    </ligand>
</feature>
<feature type="binding site" evidence="3">
    <location>
        <position position="97"/>
    </location>
    <ligand>
        <name>Mg(2+)</name>
        <dbReference type="ChEBI" id="CHEBI:18420"/>
        <label>1</label>
    </ligand>
</feature>
<feature type="binding site" evidence="3">
    <location>
        <position position="97"/>
    </location>
    <ligand>
        <name>Mg(2+)</name>
        <dbReference type="ChEBI" id="CHEBI:18420"/>
        <label>3</label>
    </ligand>
</feature>
<feature type="binding site" evidence="1">
    <location>
        <begin position="114"/>
        <end position="116"/>
    </location>
    <ligand>
        <name>substrate</name>
        <note>ligand shared between dimeric partners</note>
    </ligand>
</feature>
<feature type="binding site" description="in other chain" evidence="3">
    <location>
        <position position="120"/>
    </location>
    <ligand>
        <name>substrate</name>
        <note>ligand shared between dimeric partners</note>
    </ligand>
</feature>
<feature type="binding site" evidence="3">
    <location>
        <position position="142"/>
    </location>
    <ligand>
        <name>Mg(2+)</name>
        <dbReference type="ChEBI" id="CHEBI:18420"/>
        <label>3</label>
    </ligand>
</feature>
<feature type="mutagenesis site" description="3-fold decrease in KM for ADPR. 910-fold decrease in kcat with ADPR as substrate." evidence="5">
    <original>R</original>
    <variation>A</variation>
    <location>
        <position position="64"/>
    </location>
</feature>
<feature type="mutagenesis site" description="2.1-fold decrease in KM for ADPR. 1940-fold decrease in kcat with ADPR as substrate." evidence="5">
    <original>E</original>
    <variation>Q</variation>
    <location>
        <position position="93"/>
    </location>
</feature>
<feature type="mutagenesis site" description="2.3-fold decrease in KM for ADPR. 1150-fold decrease in kcat with ADPR as substrate." evidence="5">
    <original>E</original>
    <variation>Q</variation>
    <location>
        <position position="97"/>
    </location>
</feature>
<feature type="mutagenesis site" description="2.7-fold decrease in KM for ADPR. 300-fold decrease in kcat with ADPR as substrate." evidence="5">
    <original>E</original>
    <variation>Q</variation>
    <location>
        <position position="142"/>
    </location>
</feature>
<feature type="strand" evidence="19">
    <location>
        <begin position="7"/>
        <end position="16"/>
    </location>
</feature>
<feature type="strand" evidence="19">
    <location>
        <begin position="18"/>
        <end position="28"/>
    </location>
</feature>
<feature type="strand" evidence="19">
    <location>
        <begin position="30"/>
        <end position="32"/>
    </location>
</feature>
<feature type="strand" evidence="19">
    <location>
        <begin position="34"/>
        <end position="42"/>
    </location>
</feature>
<feature type="strand" evidence="19">
    <location>
        <begin position="45"/>
        <end position="51"/>
    </location>
</feature>
<feature type="strand" evidence="19">
    <location>
        <begin position="55"/>
        <end position="63"/>
    </location>
</feature>
<feature type="turn" evidence="19">
    <location>
        <begin position="65"/>
        <end position="67"/>
    </location>
</feature>
<feature type="strand" evidence="19">
    <location>
        <begin position="68"/>
        <end position="73"/>
    </location>
</feature>
<feature type="strand" evidence="19">
    <location>
        <begin position="75"/>
        <end position="78"/>
    </location>
</feature>
<feature type="helix" evidence="19">
    <location>
        <begin position="86"/>
        <end position="98"/>
    </location>
</feature>
<feature type="strand" evidence="19">
    <location>
        <begin position="100"/>
        <end position="113"/>
    </location>
</feature>
<feature type="turn" evidence="19">
    <location>
        <begin position="115"/>
        <end position="117"/>
    </location>
</feature>
<feature type="strand" evidence="19">
    <location>
        <begin position="121"/>
        <end position="132"/>
    </location>
</feature>
<feature type="strand" evidence="19">
    <location>
        <begin position="146"/>
        <end position="151"/>
    </location>
</feature>
<feature type="helix" evidence="19">
    <location>
        <begin position="152"/>
        <end position="160"/>
    </location>
</feature>
<feature type="helix" evidence="19">
    <location>
        <begin position="167"/>
        <end position="180"/>
    </location>
</feature>
<feature type="helix" evidence="19">
    <location>
        <begin position="199"/>
        <end position="204"/>
    </location>
</feature>
<keyword id="KW-0002">3D-structure</keyword>
<keyword id="KW-0227">DNA damage</keyword>
<keyword id="KW-0234">DNA repair</keyword>
<keyword id="KW-0235">DNA replication</keyword>
<keyword id="KW-0378">Hydrolase</keyword>
<keyword id="KW-0460">Magnesium</keyword>
<keyword id="KW-0464">Manganese</keyword>
<keyword id="KW-0479">Metal-binding</keyword>
<keyword id="KW-1185">Reference proteome</keyword>
<name>ADPP_MYCTU</name>
<evidence type="ECO:0000250" key="1">
    <source>
        <dbReference type="UniProtKB" id="Q93K97"/>
    </source>
</evidence>
<evidence type="ECO:0000255" key="2">
    <source>
        <dbReference type="PROSITE-ProRule" id="PRU00794"/>
    </source>
</evidence>
<evidence type="ECO:0000269" key="3">
    <source>
    </source>
</evidence>
<evidence type="ECO:0000269" key="4">
    <source>
    </source>
</evidence>
<evidence type="ECO:0000269" key="5">
    <source>
    </source>
</evidence>
<evidence type="ECO:0000303" key="6">
    <source>
    </source>
</evidence>
<evidence type="ECO:0000303" key="7">
    <source>
    </source>
</evidence>
<evidence type="ECO:0000305" key="8"/>
<evidence type="ECO:0000305" key="9">
    <source>
    </source>
</evidence>
<evidence type="ECO:0000305" key="10">
    <source>
    </source>
</evidence>
<evidence type="ECO:0000312" key="11">
    <source>
        <dbReference type="EMBL" id="CCP44465.1"/>
    </source>
</evidence>
<evidence type="ECO:0007744" key="12">
    <source>
        <dbReference type="PDB" id="1MK1"/>
    </source>
</evidence>
<evidence type="ECO:0007744" key="13">
    <source>
        <dbReference type="PDB" id="1MP2"/>
    </source>
</evidence>
<evidence type="ECO:0007744" key="14">
    <source>
        <dbReference type="PDB" id="1MQE"/>
    </source>
</evidence>
<evidence type="ECO:0007744" key="15">
    <source>
        <dbReference type="PDB" id="1MQW"/>
    </source>
</evidence>
<evidence type="ECO:0007744" key="16">
    <source>
        <dbReference type="PDB" id="1MR2"/>
    </source>
</evidence>
<evidence type="ECO:0007744" key="17">
    <source>
        <dbReference type="PDB" id="5I8U"/>
    </source>
</evidence>
<evidence type="ECO:0007744" key="18">
    <source>
    </source>
</evidence>
<evidence type="ECO:0007829" key="19">
    <source>
        <dbReference type="PDB" id="5I8U"/>
    </source>
</evidence>
<proteinExistence type="evidence at protein level"/>
<dbReference type="EC" id="3.6.1.13" evidence="5"/>
<dbReference type="EC" id="3.6.1.58" evidence="4"/>
<dbReference type="EMBL" id="AL123456">
    <property type="protein sequence ID" value="CCP44465.1"/>
    <property type="molecule type" value="Genomic_DNA"/>
</dbReference>
<dbReference type="RefSeq" id="NP_216216.1">
    <property type="nucleotide sequence ID" value="NC_000962.3"/>
</dbReference>
<dbReference type="RefSeq" id="WP_003408399.1">
    <property type="nucleotide sequence ID" value="NZ_NVQJ01000010.1"/>
</dbReference>
<dbReference type="PDB" id="1MK1">
    <property type="method" value="X-ray"/>
    <property type="resolution" value="2.00 A"/>
    <property type="chains" value="A=1-207"/>
</dbReference>
<dbReference type="PDB" id="1MP2">
    <property type="method" value="X-ray"/>
    <property type="resolution" value="2.30 A"/>
    <property type="chains" value="A=1-207"/>
</dbReference>
<dbReference type="PDB" id="1MQE">
    <property type="method" value="X-ray"/>
    <property type="resolution" value="2.00 A"/>
    <property type="chains" value="A=1-207"/>
</dbReference>
<dbReference type="PDB" id="1MQW">
    <property type="method" value="X-ray"/>
    <property type="resolution" value="2.30 A"/>
    <property type="chains" value="A=1-207"/>
</dbReference>
<dbReference type="PDB" id="1MR2">
    <property type="method" value="X-ray"/>
    <property type="resolution" value="2.30 A"/>
    <property type="chains" value="A=1-207"/>
</dbReference>
<dbReference type="PDB" id="5I8U">
    <property type="method" value="X-ray"/>
    <property type="resolution" value="2.00 A"/>
    <property type="chains" value="A/B/C/D/E/F/G=1-207"/>
</dbReference>
<dbReference type="PDBsum" id="1MK1"/>
<dbReference type="PDBsum" id="1MP2"/>
<dbReference type="PDBsum" id="1MQE"/>
<dbReference type="PDBsum" id="1MQW"/>
<dbReference type="PDBsum" id="1MR2"/>
<dbReference type="PDBsum" id="5I8U"/>
<dbReference type="SMR" id="I6X235"/>
<dbReference type="FunCoup" id="I6X235">
    <property type="interactions" value="4"/>
</dbReference>
<dbReference type="STRING" id="83332.Rv1700"/>
<dbReference type="PaxDb" id="83332-Rv1700"/>
<dbReference type="DNASU" id="885049"/>
<dbReference type="GeneID" id="885049"/>
<dbReference type="KEGG" id="mtu:Rv1700"/>
<dbReference type="KEGG" id="mtv:RVBD_1700"/>
<dbReference type="PATRIC" id="fig|83332.111.peg.1888"/>
<dbReference type="TubercuList" id="Rv1700"/>
<dbReference type="eggNOG" id="COG0494">
    <property type="taxonomic scope" value="Bacteria"/>
</dbReference>
<dbReference type="InParanoid" id="I6X235"/>
<dbReference type="OrthoDB" id="9806150at2"/>
<dbReference type="PhylomeDB" id="I6X235"/>
<dbReference type="BioCyc" id="MetaCyc:G185E-5891-MONOMER"/>
<dbReference type="Proteomes" id="UP000001584">
    <property type="component" value="Chromosome"/>
</dbReference>
<dbReference type="GO" id="GO:0005829">
    <property type="term" value="C:cytosol"/>
    <property type="evidence" value="ECO:0000318"/>
    <property type="project" value="GO_Central"/>
</dbReference>
<dbReference type="GO" id="GO:0044715">
    <property type="term" value="F:8-oxo-dGDP phosphatase activity"/>
    <property type="evidence" value="ECO:0007669"/>
    <property type="project" value="RHEA"/>
</dbReference>
<dbReference type="GO" id="GO:0044716">
    <property type="term" value="F:8-oxo-GDP phosphatase activity"/>
    <property type="evidence" value="ECO:0007669"/>
    <property type="project" value="RHEA"/>
</dbReference>
<dbReference type="GO" id="GO:0047631">
    <property type="term" value="F:ADP-ribose diphosphatase activity"/>
    <property type="evidence" value="ECO:0007669"/>
    <property type="project" value="UniProtKB-EC"/>
</dbReference>
<dbReference type="GO" id="GO:0046872">
    <property type="term" value="F:metal ion binding"/>
    <property type="evidence" value="ECO:0007669"/>
    <property type="project" value="UniProtKB-KW"/>
</dbReference>
<dbReference type="GO" id="GO:0006281">
    <property type="term" value="P:DNA repair"/>
    <property type="evidence" value="ECO:0007669"/>
    <property type="project" value="UniProtKB-KW"/>
</dbReference>
<dbReference type="GO" id="GO:0006260">
    <property type="term" value="P:DNA replication"/>
    <property type="evidence" value="ECO:0007669"/>
    <property type="project" value="UniProtKB-KW"/>
</dbReference>
<dbReference type="GO" id="GO:0006753">
    <property type="term" value="P:nucleoside phosphate metabolic process"/>
    <property type="evidence" value="ECO:0000318"/>
    <property type="project" value="GO_Central"/>
</dbReference>
<dbReference type="GO" id="GO:0019693">
    <property type="term" value="P:ribose phosphate metabolic process"/>
    <property type="evidence" value="ECO:0000318"/>
    <property type="project" value="GO_Central"/>
</dbReference>
<dbReference type="CDD" id="cd24158">
    <property type="entry name" value="NUDIX_ADPRase_Rv1700"/>
    <property type="match status" value="1"/>
</dbReference>
<dbReference type="FunFam" id="3.90.79.10:FF:000097">
    <property type="entry name" value="MutT/nudix family protein"/>
    <property type="match status" value="1"/>
</dbReference>
<dbReference type="Gene3D" id="3.90.79.10">
    <property type="entry name" value="Nucleoside Triphosphate Pyrophosphohydrolase"/>
    <property type="match status" value="1"/>
</dbReference>
<dbReference type="InterPro" id="IPR015797">
    <property type="entry name" value="NUDIX_hydrolase-like_dom_sf"/>
</dbReference>
<dbReference type="InterPro" id="IPR000086">
    <property type="entry name" value="NUDIX_hydrolase_dom"/>
</dbReference>
<dbReference type="PANTHER" id="PTHR11839:SF31">
    <property type="entry name" value="ADP-RIBOSE PYROPHOSPHATASE"/>
    <property type="match status" value="1"/>
</dbReference>
<dbReference type="PANTHER" id="PTHR11839">
    <property type="entry name" value="UDP/ADP-SUGAR PYROPHOSPHATASE"/>
    <property type="match status" value="1"/>
</dbReference>
<dbReference type="Pfam" id="PF00293">
    <property type="entry name" value="NUDIX"/>
    <property type="match status" value="1"/>
</dbReference>
<dbReference type="SUPFAM" id="SSF55811">
    <property type="entry name" value="Nudix"/>
    <property type="match status" value="1"/>
</dbReference>
<dbReference type="PROSITE" id="PS51462">
    <property type="entry name" value="NUDIX"/>
    <property type="match status" value="1"/>
</dbReference>